<evidence type="ECO:0000255" key="1">
    <source>
        <dbReference type="HAMAP-Rule" id="MF_02006"/>
    </source>
</evidence>
<protein>
    <recommendedName>
        <fullName evidence="1">Tyrosine--tRNA ligase</fullName>
        <ecNumber evidence="1">6.1.1.1</ecNumber>
    </recommendedName>
    <alternativeName>
        <fullName evidence="1">Tyrosyl-tRNA synthetase</fullName>
        <shortName evidence="1">TyrRS</shortName>
    </alternativeName>
</protein>
<gene>
    <name evidence="1" type="primary">tyrS</name>
    <name type="ordered locus">PPA1404</name>
</gene>
<sequence length="418" mass="46257">MSDLLDDLEWRGLVADSTDREALEAHLAQGPVTFYVGFDPTAKSLHIGHLVQLMLVRALQERGHKPLLLVGGATGLIGDPKMTGERHMNDREVVAEWVESIKDQVSKYVDTDGRNAAQIVNNYDWTVKYTALDLLRDVGKHFSVNRMLARDVVARRLESGISYTEFSYVLLQSLDFYELHKRYGCTLQTGAQDQWGNITAGAEFIRKTTGDVVHGLVTPLITKADGTKYGKTESGTVWVDPELTSAYAFHQFFLNAEDSKVIEYLKIFSPRSREEIEDLARKTEEEPWRRAAQHCLADDLTDLVHGVEQRKAAEAAAQAIFGRGELRDLDERTVLSLSDELGAAHHEGGEYPTVVGAMVAAGVVDTKSGGRRAVAEGGAYLNNVKVADPDQRLTDDDFLCGRVALVRRGKKTVGALTR</sequence>
<proteinExistence type="inferred from homology"/>
<dbReference type="EC" id="6.1.1.1" evidence="1"/>
<dbReference type="EMBL" id="AE017283">
    <property type="protein sequence ID" value="AAT83155.1"/>
    <property type="molecule type" value="Genomic_DNA"/>
</dbReference>
<dbReference type="RefSeq" id="WP_009640057.1">
    <property type="nucleotide sequence ID" value="NZ_CP025935.1"/>
</dbReference>
<dbReference type="SMR" id="Q6A7W0"/>
<dbReference type="EnsemblBacteria" id="AAT83155">
    <property type="protein sequence ID" value="AAT83155"/>
    <property type="gene ID" value="PPA1404"/>
</dbReference>
<dbReference type="KEGG" id="pac:PPA1404"/>
<dbReference type="PATRIC" id="fig|267747.3.peg.1449"/>
<dbReference type="eggNOG" id="COG0162">
    <property type="taxonomic scope" value="Bacteria"/>
</dbReference>
<dbReference type="HOGENOM" id="CLU_024003_0_2_11"/>
<dbReference type="Proteomes" id="UP000000603">
    <property type="component" value="Chromosome"/>
</dbReference>
<dbReference type="GO" id="GO:0005829">
    <property type="term" value="C:cytosol"/>
    <property type="evidence" value="ECO:0007669"/>
    <property type="project" value="TreeGrafter"/>
</dbReference>
<dbReference type="GO" id="GO:0005524">
    <property type="term" value="F:ATP binding"/>
    <property type="evidence" value="ECO:0007669"/>
    <property type="project" value="UniProtKB-UniRule"/>
</dbReference>
<dbReference type="GO" id="GO:0003723">
    <property type="term" value="F:RNA binding"/>
    <property type="evidence" value="ECO:0007669"/>
    <property type="project" value="UniProtKB-KW"/>
</dbReference>
<dbReference type="GO" id="GO:0004831">
    <property type="term" value="F:tyrosine-tRNA ligase activity"/>
    <property type="evidence" value="ECO:0007669"/>
    <property type="project" value="UniProtKB-UniRule"/>
</dbReference>
<dbReference type="GO" id="GO:0006437">
    <property type="term" value="P:tyrosyl-tRNA aminoacylation"/>
    <property type="evidence" value="ECO:0007669"/>
    <property type="project" value="UniProtKB-UniRule"/>
</dbReference>
<dbReference type="CDD" id="cd00805">
    <property type="entry name" value="TyrRS_core"/>
    <property type="match status" value="1"/>
</dbReference>
<dbReference type="FunFam" id="1.10.240.10:FF:000001">
    <property type="entry name" value="Tyrosine--tRNA ligase"/>
    <property type="match status" value="1"/>
</dbReference>
<dbReference type="FunFam" id="3.40.50.620:FF:000008">
    <property type="entry name" value="Tyrosine--tRNA ligase"/>
    <property type="match status" value="1"/>
</dbReference>
<dbReference type="Gene3D" id="3.40.50.620">
    <property type="entry name" value="HUPs"/>
    <property type="match status" value="1"/>
</dbReference>
<dbReference type="Gene3D" id="3.10.290.10">
    <property type="entry name" value="RNA-binding S4 domain"/>
    <property type="match status" value="1"/>
</dbReference>
<dbReference type="Gene3D" id="1.10.240.10">
    <property type="entry name" value="Tyrosyl-Transfer RNA Synthetase"/>
    <property type="match status" value="1"/>
</dbReference>
<dbReference type="HAMAP" id="MF_02006">
    <property type="entry name" value="Tyr_tRNA_synth_type1"/>
    <property type="match status" value="1"/>
</dbReference>
<dbReference type="InterPro" id="IPR001412">
    <property type="entry name" value="aa-tRNA-synth_I_CS"/>
</dbReference>
<dbReference type="InterPro" id="IPR002305">
    <property type="entry name" value="aa-tRNA-synth_Ic"/>
</dbReference>
<dbReference type="InterPro" id="IPR014729">
    <property type="entry name" value="Rossmann-like_a/b/a_fold"/>
</dbReference>
<dbReference type="InterPro" id="IPR036986">
    <property type="entry name" value="S4_RNA-bd_sf"/>
</dbReference>
<dbReference type="InterPro" id="IPR054608">
    <property type="entry name" value="SYY-like_C"/>
</dbReference>
<dbReference type="InterPro" id="IPR002307">
    <property type="entry name" value="Tyr-tRNA-ligase"/>
</dbReference>
<dbReference type="InterPro" id="IPR024088">
    <property type="entry name" value="Tyr-tRNA-ligase_bac-type"/>
</dbReference>
<dbReference type="InterPro" id="IPR024107">
    <property type="entry name" value="Tyr-tRNA-ligase_bac_1"/>
</dbReference>
<dbReference type="NCBIfam" id="TIGR00234">
    <property type="entry name" value="tyrS"/>
    <property type="match status" value="1"/>
</dbReference>
<dbReference type="PANTHER" id="PTHR11766:SF0">
    <property type="entry name" value="TYROSINE--TRNA LIGASE, MITOCHONDRIAL"/>
    <property type="match status" value="1"/>
</dbReference>
<dbReference type="PANTHER" id="PTHR11766">
    <property type="entry name" value="TYROSYL-TRNA SYNTHETASE"/>
    <property type="match status" value="1"/>
</dbReference>
<dbReference type="Pfam" id="PF22421">
    <property type="entry name" value="SYY_C-terminal"/>
    <property type="match status" value="1"/>
</dbReference>
<dbReference type="Pfam" id="PF00579">
    <property type="entry name" value="tRNA-synt_1b"/>
    <property type="match status" value="1"/>
</dbReference>
<dbReference type="PRINTS" id="PR01040">
    <property type="entry name" value="TRNASYNTHTYR"/>
</dbReference>
<dbReference type="SUPFAM" id="SSF55174">
    <property type="entry name" value="Alpha-L RNA-binding motif"/>
    <property type="match status" value="1"/>
</dbReference>
<dbReference type="SUPFAM" id="SSF52374">
    <property type="entry name" value="Nucleotidylyl transferase"/>
    <property type="match status" value="1"/>
</dbReference>
<dbReference type="PROSITE" id="PS00178">
    <property type="entry name" value="AA_TRNA_LIGASE_I"/>
    <property type="match status" value="1"/>
</dbReference>
<dbReference type="PROSITE" id="PS50889">
    <property type="entry name" value="S4"/>
    <property type="match status" value="1"/>
</dbReference>
<comment type="function">
    <text evidence="1">Catalyzes the attachment of tyrosine to tRNA(Tyr) in a two-step reaction: tyrosine is first activated by ATP to form Tyr-AMP and then transferred to the acceptor end of tRNA(Tyr).</text>
</comment>
<comment type="catalytic activity">
    <reaction evidence="1">
        <text>tRNA(Tyr) + L-tyrosine + ATP = L-tyrosyl-tRNA(Tyr) + AMP + diphosphate + H(+)</text>
        <dbReference type="Rhea" id="RHEA:10220"/>
        <dbReference type="Rhea" id="RHEA-COMP:9706"/>
        <dbReference type="Rhea" id="RHEA-COMP:9707"/>
        <dbReference type="ChEBI" id="CHEBI:15378"/>
        <dbReference type="ChEBI" id="CHEBI:30616"/>
        <dbReference type="ChEBI" id="CHEBI:33019"/>
        <dbReference type="ChEBI" id="CHEBI:58315"/>
        <dbReference type="ChEBI" id="CHEBI:78442"/>
        <dbReference type="ChEBI" id="CHEBI:78536"/>
        <dbReference type="ChEBI" id="CHEBI:456215"/>
        <dbReference type="EC" id="6.1.1.1"/>
    </reaction>
</comment>
<comment type="subunit">
    <text evidence="1">Homodimer.</text>
</comment>
<comment type="subcellular location">
    <subcellularLocation>
        <location evidence="1">Cytoplasm</location>
    </subcellularLocation>
</comment>
<comment type="similarity">
    <text evidence="1">Belongs to the class-I aminoacyl-tRNA synthetase family. TyrS type 1 subfamily.</text>
</comment>
<name>SYY_CUTAK</name>
<reference key="1">
    <citation type="journal article" date="2004" name="Science">
        <title>The complete genome sequence of Propionibacterium acnes, a commensal of human skin.</title>
        <authorList>
            <person name="Brueggemann H."/>
            <person name="Henne A."/>
            <person name="Hoster F."/>
            <person name="Liesegang H."/>
            <person name="Wiezer A."/>
            <person name="Strittmatter A."/>
            <person name="Hujer S."/>
            <person name="Duerre P."/>
            <person name="Gottschalk G."/>
        </authorList>
    </citation>
    <scope>NUCLEOTIDE SEQUENCE [LARGE SCALE GENOMIC DNA]</scope>
    <source>
        <strain>DSM 16379 / KPA171202</strain>
    </source>
</reference>
<keyword id="KW-0030">Aminoacyl-tRNA synthetase</keyword>
<keyword id="KW-0067">ATP-binding</keyword>
<keyword id="KW-0963">Cytoplasm</keyword>
<keyword id="KW-0436">Ligase</keyword>
<keyword id="KW-0547">Nucleotide-binding</keyword>
<keyword id="KW-0648">Protein biosynthesis</keyword>
<keyword id="KW-0694">RNA-binding</keyword>
<organism>
    <name type="scientific">Cutibacterium acnes (strain DSM 16379 / KPA171202)</name>
    <name type="common">Propionibacterium acnes</name>
    <dbReference type="NCBI Taxonomy" id="267747"/>
    <lineage>
        <taxon>Bacteria</taxon>
        <taxon>Bacillati</taxon>
        <taxon>Actinomycetota</taxon>
        <taxon>Actinomycetes</taxon>
        <taxon>Propionibacteriales</taxon>
        <taxon>Propionibacteriaceae</taxon>
        <taxon>Cutibacterium</taxon>
    </lineage>
</organism>
<feature type="chain" id="PRO_0000234751" description="Tyrosine--tRNA ligase">
    <location>
        <begin position="1"/>
        <end position="418"/>
    </location>
</feature>
<feature type="domain" description="S4 RNA-binding" evidence="1">
    <location>
        <begin position="352"/>
        <end position="410"/>
    </location>
</feature>
<feature type="short sequence motif" description="'HIGH' region">
    <location>
        <begin position="40"/>
        <end position="49"/>
    </location>
</feature>
<feature type="short sequence motif" description="'KMSKS' region">
    <location>
        <begin position="228"/>
        <end position="232"/>
    </location>
</feature>
<feature type="binding site" evidence="1">
    <location>
        <position position="35"/>
    </location>
    <ligand>
        <name>L-tyrosine</name>
        <dbReference type="ChEBI" id="CHEBI:58315"/>
    </ligand>
</feature>
<feature type="binding site" evidence="1">
    <location>
        <position position="168"/>
    </location>
    <ligand>
        <name>L-tyrosine</name>
        <dbReference type="ChEBI" id="CHEBI:58315"/>
    </ligand>
</feature>
<feature type="binding site" evidence="1">
    <location>
        <position position="172"/>
    </location>
    <ligand>
        <name>L-tyrosine</name>
        <dbReference type="ChEBI" id="CHEBI:58315"/>
    </ligand>
</feature>
<feature type="binding site" evidence="1">
    <location>
        <position position="231"/>
    </location>
    <ligand>
        <name>ATP</name>
        <dbReference type="ChEBI" id="CHEBI:30616"/>
    </ligand>
</feature>
<accession>Q6A7W0</accession>